<reference key="1">
    <citation type="submission" date="2007-12" db="EMBL/GenBank/DDBJ databases">
        <title>Complete sequence of chromosome of Francisella philomiragia subsp. philomiragia ATCC 25017.</title>
        <authorList>
            <consortium name="US DOE Joint Genome Institute"/>
            <person name="Copeland A."/>
            <person name="Lucas S."/>
            <person name="Lapidus A."/>
            <person name="Barry K."/>
            <person name="Detter J.C."/>
            <person name="Glavina del Rio T."/>
            <person name="Hammon N."/>
            <person name="Israni S."/>
            <person name="Dalin E."/>
            <person name="Tice H."/>
            <person name="Pitluck S."/>
            <person name="Chain P."/>
            <person name="Malfatti S."/>
            <person name="Shin M."/>
            <person name="Vergez L."/>
            <person name="Schmutz J."/>
            <person name="Larimer F."/>
            <person name="Land M."/>
            <person name="Hauser L."/>
            <person name="Richardson P."/>
        </authorList>
    </citation>
    <scope>NUCLEOTIDE SEQUENCE [LARGE SCALE GENOMIC DNA]</scope>
    <source>
        <strain>ATCC 25017 / CCUG 19701 / FSC 153 / O#319-036</strain>
    </source>
</reference>
<organism>
    <name type="scientific">Francisella philomiragia subsp. philomiragia (strain ATCC 25017 / CCUG 19701 / FSC 153 / O#319-036)</name>
    <dbReference type="NCBI Taxonomy" id="484022"/>
    <lineage>
        <taxon>Bacteria</taxon>
        <taxon>Pseudomonadati</taxon>
        <taxon>Pseudomonadota</taxon>
        <taxon>Gammaproteobacteria</taxon>
        <taxon>Thiotrichales</taxon>
        <taxon>Francisellaceae</taxon>
        <taxon>Francisella</taxon>
    </lineage>
</organism>
<dbReference type="EMBL" id="CP000937">
    <property type="protein sequence ID" value="ABZ87171.1"/>
    <property type="molecule type" value="Genomic_DNA"/>
</dbReference>
<dbReference type="SMR" id="B0TWR3"/>
<dbReference type="KEGG" id="fph:Fphi_0948"/>
<dbReference type="eggNOG" id="COG0532">
    <property type="taxonomic scope" value="Bacteria"/>
</dbReference>
<dbReference type="HOGENOM" id="CLU_006301_6_1_6"/>
<dbReference type="GO" id="GO:0005829">
    <property type="term" value="C:cytosol"/>
    <property type="evidence" value="ECO:0007669"/>
    <property type="project" value="TreeGrafter"/>
</dbReference>
<dbReference type="GO" id="GO:0005525">
    <property type="term" value="F:GTP binding"/>
    <property type="evidence" value="ECO:0007669"/>
    <property type="project" value="UniProtKB-KW"/>
</dbReference>
<dbReference type="GO" id="GO:0003924">
    <property type="term" value="F:GTPase activity"/>
    <property type="evidence" value="ECO:0007669"/>
    <property type="project" value="UniProtKB-UniRule"/>
</dbReference>
<dbReference type="GO" id="GO:0003743">
    <property type="term" value="F:translation initiation factor activity"/>
    <property type="evidence" value="ECO:0007669"/>
    <property type="project" value="UniProtKB-UniRule"/>
</dbReference>
<dbReference type="CDD" id="cd01887">
    <property type="entry name" value="IF2_eIF5B"/>
    <property type="match status" value="1"/>
</dbReference>
<dbReference type="CDD" id="cd03702">
    <property type="entry name" value="IF2_mtIF2_II"/>
    <property type="match status" value="1"/>
</dbReference>
<dbReference type="CDD" id="cd03692">
    <property type="entry name" value="mtIF2_IVc"/>
    <property type="match status" value="1"/>
</dbReference>
<dbReference type="FunFam" id="2.40.30.10:FF:000007">
    <property type="entry name" value="Translation initiation factor IF-2"/>
    <property type="match status" value="1"/>
</dbReference>
<dbReference type="FunFam" id="2.40.30.10:FF:000008">
    <property type="entry name" value="Translation initiation factor IF-2"/>
    <property type="match status" value="1"/>
</dbReference>
<dbReference type="FunFam" id="3.40.50.10050:FF:000001">
    <property type="entry name" value="Translation initiation factor IF-2"/>
    <property type="match status" value="1"/>
</dbReference>
<dbReference type="FunFam" id="3.40.50.300:FF:000019">
    <property type="entry name" value="Translation initiation factor IF-2"/>
    <property type="match status" value="1"/>
</dbReference>
<dbReference type="Gene3D" id="3.40.50.300">
    <property type="entry name" value="P-loop containing nucleotide triphosphate hydrolases"/>
    <property type="match status" value="1"/>
</dbReference>
<dbReference type="Gene3D" id="3.30.56.50">
    <property type="entry name" value="Putative DNA-binding domain, N-terminal subdomain of bacterial translation initiation factor IF2"/>
    <property type="match status" value="1"/>
</dbReference>
<dbReference type="Gene3D" id="2.40.30.10">
    <property type="entry name" value="Translation factors"/>
    <property type="match status" value="2"/>
</dbReference>
<dbReference type="Gene3D" id="3.40.50.10050">
    <property type="entry name" value="Translation initiation factor IF- 2, domain 3"/>
    <property type="match status" value="1"/>
</dbReference>
<dbReference type="HAMAP" id="MF_00100_B">
    <property type="entry name" value="IF_2_B"/>
    <property type="match status" value="1"/>
</dbReference>
<dbReference type="InterPro" id="IPR009061">
    <property type="entry name" value="DNA-bd_dom_put_sf"/>
</dbReference>
<dbReference type="InterPro" id="IPR053905">
    <property type="entry name" value="EF-G-like_DII"/>
</dbReference>
<dbReference type="InterPro" id="IPR044145">
    <property type="entry name" value="IF2_II"/>
</dbReference>
<dbReference type="InterPro" id="IPR006847">
    <property type="entry name" value="IF2_N"/>
</dbReference>
<dbReference type="InterPro" id="IPR027417">
    <property type="entry name" value="P-loop_NTPase"/>
</dbReference>
<dbReference type="InterPro" id="IPR005225">
    <property type="entry name" value="Small_GTP-bd"/>
</dbReference>
<dbReference type="InterPro" id="IPR000795">
    <property type="entry name" value="T_Tr_GTP-bd_dom"/>
</dbReference>
<dbReference type="InterPro" id="IPR000178">
    <property type="entry name" value="TF_IF2_bacterial-like"/>
</dbReference>
<dbReference type="InterPro" id="IPR015760">
    <property type="entry name" value="TIF_IF2"/>
</dbReference>
<dbReference type="InterPro" id="IPR023115">
    <property type="entry name" value="TIF_IF2_dom3"/>
</dbReference>
<dbReference type="InterPro" id="IPR036925">
    <property type="entry name" value="TIF_IF2_dom3_sf"/>
</dbReference>
<dbReference type="InterPro" id="IPR009000">
    <property type="entry name" value="Transl_B-barrel_sf"/>
</dbReference>
<dbReference type="NCBIfam" id="TIGR00487">
    <property type="entry name" value="IF-2"/>
    <property type="match status" value="1"/>
</dbReference>
<dbReference type="NCBIfam" id="TIGR00231">
    <property type="entry name" value="small_GTP"/>
    <property type="match status" value="1"/>
</dbReference>
<dbReference type="PANTHER" id="PTHR43381:SF5">
    <property type="entry name" value="TR-TYPE G DOMAIN-CONTAINING PROTEIN"/>
    <property type="match status" value="1"/>
</dbReference>
<dbReference type="PANTHER" id="PTHR43381">
    <property type="entry name" value="TRANSLATION INITIATION FACTOR IF-2-RELATED"/>
    <property type="match status" value="1"/>
</dbReference>
<dbReference type="Pfam" id="PF22042">
    <property type="entry name" value="EF-G_D2"/>
    <property type="match status" value="1"/>
</dbReference>
<dbReference type="Pfam" id="PF00009">
    <property type="entry name" value="GTP_EFTU"/>
    <property type="match status" value="1"/>
</dbReference>
<dbReference type="Pfam" id="PF11987">
    <property type="entry name" value="IF-2"/>
    <property type="match status" value="1"/>
</dbReference>
<dbReference type="Pfam" id="PF04760">
    <property type="entry name" value="IF2_N"/>
    <property type="match status" value="2"/>
</dbReference>
<dbReference type="SUPFAM" id="SSF52156">
    <property type="entry name" value="Initiation factor IF2/eIF5b, domain 3"/>
    <property type="match status" value="1"/>
</dbReference>
<dbReference type="SUPFAM" id="SSF52540">
    <property type="entry name" value="P-loop containing nucleoside triphosphate hydrolases"/>
    <property type="match status" value="1"/>
</dbReference>
<dbReference type="SUPFAM" id="SSF46955">
    <property type="entry name" value="Putative DNA-binding domain"/>
    <property type="match status" value="1"/>
</dbReference>
<dbReference type="SUPFAM" id="SSF50447">
    <property type="entry name" value="Translation proteins"/>
    <property type="match status" value="2"/>
</dbReference>
<dbReference type="PROSITE" id="PS51722">
    <property type="entry name" value="G_TR_2"/>
    <property type="match status" value="1"/>
</dbReference>
<dbReference type="PROSITE" id="PS01176">
    <property type="entry name" value="IF2"/>
    <property type="match status" value="1"/>
</dbReference>
<gene>
    <name evidence="2" type="primary">infB</name>
    <name type="ordered locus">Fphi_0948</name>
</gene>
<name>IF2_FRAP2</name>
<comment type="function">
    <text evidence="2">One of the essential components for the initiation of protein synthesis. Protects formylmethionyl-tRNA from spontaneous hydrolysis and promotes its binding to the 30S ribosomal subunits. Also involved in the hydrolysis of GTP during the formation of the 70S ribosomal complex.</text>
</comment>
<comment type="subcellular location">
    <subcellularLocation>
        <location evidence="2">Cytoplasm</location>
    </subcellularLocation>
</comment>
<comment type="similarity">
    <text evidence="2">Belongs to the TRAFAC class translation factor GTPase superfamily. Classic translation factor GTPase family. IF-2 subfamily.</text>
</comment>
<evidence type="ECO:0000250" key="1"/>
<evidence type="ECO:0000255" key="2">
    <source>
        <dbReference type="HAMAP-Rule" id="MF_00100"/>
    </source>
</evidence>
<evidence type="ECO:0000256" key="3">
    <source>
        <dbReference type="SAM" id="MobiDB-lite"/>
    </source>
</evidence>
<feature type="chain" id="PRO_1000075606" description="Translation initiation factor IF-2">
    <location>
        <begin position="1"/>
        <end position="844"/>
    </location>
</feature>
<feature type="domain" description="tr-type G">
    <location>
        <begin position="343"/>
        <end position="510"/>
    </location>
</feature>
<feature type="region of interest" description="Disordered" evidence="3">
    <location>
        <begin position="120"/>
        <end position="220"/>
    </location>
</feature>
<feature type="region of interest" description="G1" evidence="1">
    <location>
        <begin position="352"/>
        <end position="359"/>
    </location>
</feature>
<feature type="region of interest" description="G2" evidence="1">
    <location>
        <begin position="377"/>
        <end position="381"/>
    </location>
</feature>
<feature type="region of interest" description="G3" evidence="1">
    <location>
        <begin position="398"/>
        <end position="401"/>
    </location>
</feature>
<feature type="region of interest" description="G4" evidence="1">
    <location>
        <begin position="452"/>
        <end position="455"/>
    </location>
</feature>
<feature type="region of interest" description="G5" evidence="1">
    <location>
        <begin position="488"/>
        <end position="490"/>
    </location>
</feature>
<feature type="compositionally biased region" description="Polar residues" evidence="3">
    <location>
        <begin position="120"/>
        <end position="132"/>
    </location>
</feature>
<feature type="compositionally biased region" description="Basic and acidic residues" evidence="3">
    <location>
        <begin position="161"/>
        <end position="175"/>
    </location>
</feature>
<feature type="compositionally biased region" description="Basic residues" evidence="3">
    <location>
        <begin position="205"/>
        <end position="219"/>
    </location>
</feature>
<feature type="binding site" evidence="2">
    <location>
        <begin position="352"/>
        <end position="359"/>
    </location>
    <ligand>
        <name>GTP</name>
        <dbReference type="ChEBI" id="CHEBI:37565"/>
    </ligand>
</feature>
<feature type="binding site" evidence="2">
    <location>
        <begin position="398"/>
        <end position="402"/>
    </location>
    <ligand>
        <name>GTP</name>
        <dbReference type="ChEBI" id="CHEBI:37565"/>
    </ligand>
</feature>
<feature type="binding site" evidence="2">
    <location>
        <begin position="452"/>
        <end position="455"/>
    </location>
    <ligand>
        <name>GTP</name>
        <dbReference type="ChEBI" id="CHEBI:37565"/>
    </ligand>
</feature>
<proteinExistence type="inferred from homology"/>
<sequence length="844" mass="91762">MAEITVGQLAQQTNKEVSTLLKQLKSFGIEKSSEKDTLTPEEMKTLLDKINSAKNTVTRKKVTSLKLDGKHKINVSVKKKRRVAKKVEEQSPAKVEESIVEKPQAAVDVKDNKAVESVERNSVNLVQPQQEKPVTKPVIKDNGFKITAMPEVKIQENNSQDEEKSSEDKSTESKNNKKKSPKKVFTESGNNTNTKYKREEEEKKSKAKKASGKGFKKANPRQLSQLAGDLESFDEFGSKKGKLKAPKVKKQEFTMPVESAVKTIEIREGITVSDLANRMAVKGAEIVKVLFNMGVMATINQSLDQDTAVLIVEEMGHKYTLHNENALEEAVTTVDRSLHKKISRAPVVTIMGHVDHGKTSLLDYIRKARVVAGEAGGITQHIGAYSVKTSKGAITFLDTPGHEAFTSMRARGAKSTDIVILVVAADDGVMPQTEEAIQHAKAAGVPIVVAVNKIDKPDADPDKVVGELAQRNVIPESWGGDVMFANVSAKTGEGVAELLDAVLLQSEVLELEAFAEGLAEGVVIESRLEKGRGPVATVLVQNGSLKQGDNILCGTEYGRVRAMHDDLGKQIKVAGPATPVEILGLSGVPAAGDDMVVIENEKKAKELAAQRSQRQKEAKIAQEQSLKLSNMFSNMGKEGEQQTLKIILKGDVQGSVEAIRESLLKLSTDEVKVDIIASGIGAITSSDVTLAVASTAVIIGFNVRADSAAKKLAEVDGVELRYYNIIYDLIDDVKKAMTGLLSPDMKEQIIGIAEVREVYRSSKFGSIAGCMVVEGAVKRTNPIRVLRDNVVIYEGTLESLKRFKDDASEVKKGMECGIGVKNYNDVREGDQIEVFEVIEVAKEL</sequence>
<keyword id="KW-0963">Cytoplasm</keyword>
<keyword id="KW-0342">GTP-binding</keyword>
<keyword id="KW-0396">Initiation factor</keyword>
<keyword id="KW-0547">Nucleotide-binding</keyword>
<keyword id="KW-0648">Protein biosynthesis</keyword>
<protein>
    <recommendedName>
        <fullName evidence="2">Translation initiation factor IF-2</fullName>
    </recommendedName>
</protein>
<accession>B0TWR3</accession>